<evidence type="ECO:0000255" key="1">
    <source>
        <dbReference type="HAMAP-Rule" id="MF_01038"/>
    </source>
</evidence>
<reference key="1">
    <citation type="journal article" date="2007" name="PLoS ONE">
        <title>Complete genomic characterization of a pathogenic A.II strain of Francisella tularensis subspecies tularensis.</title>
        <authorList>
            <person name="Beckstrom-Sternberg S.M."/>
            <person name="Auerbach R.K."/>
            <person name="Godbole S."/>
            <person name="Pearson J.V."/>
            <person name="Beckstrom-Sternberg J.S."/>
            <person name="Deng Z."/>
            <person name="Munk C."/>
            <person name="Kubota K."/>
            <person name="Zhou Y."/>
            <person name="Bruce D."/>
            <person name="Noronha J."/>
            <person name="Scheuermann R.H."/>
            <person name="Wang A."/>
            <person name="Wei X."/>
            <person name="Wang J."/>
            <person name="Hao J."/>
            <person name="Wagner D.M."/>
            <person name="Brettin T.S."/>
            <person name="Brown N."/>
            <person name="Gilna P."/>
            <person name="Keim P.S."/>
        </authorList>
    </citation>
    <scope>NUCLEOTIDE SEQUENCE [LARGE SCALE GENOMIC DNA]</scope>
    <source>
        <strain>WY96-3418</strain>
    </source>
</reference>
<protein>
    <recommendedName>
        <fullName evidence="1">2,3-bisphosphoglycerate-independent phosphoglycerate mutase</fullName>
        <shortName evidence="1">BPG-independent PGAM</shortName>
        <shortName evidence="1">Phosphoglyceromutase</shortName>
        <shortName evidence="1">iPGM</shortName>
        <ecNumber evidence="1">5.4.2.12</ecNumber>
    </recommendedName>
</protein>
<name>GPMI_FRATW</name>
<organism>
    <name type="scientific">Francisella tularensis subsp. tularensis (strain WY96-3418)</name>
    <dbReference type="NCBI Taxonomy" id="418136"/>
    <lineage>
        <taxon>Bacteria</taxon>
        <taxon>Pseudomonadati</taxon>
        <taxon>Pseudomonadota</taxon>
        <taxon>Gammaproteobacteria</taxon>
        <taxon>Thiotrichales</taxon>
        <taxon>Francisellaceae</taxon>
        <taxon>Francisella</taxon>
    </lineage>
</organism>
<keyword id="KW-0324">Glycolysis</keyword>
<keyword id="KW-0413">Isomerase</keyword>
<keyword id="KW-0464">Manganese</keyword>
<keyword id="KW-0479">Metal-binding</keyword>
<accession>A4IZ68</accession>
<sequence>MKKTTLLVILDGWGYSDSDYFNAIKNANTPTWDSIWQEFPKTLINASSLEVGLPRSQMGNSEVGHVNIGCGRVVYQELTKIDKAIEEKTFGDNKAICAAIDNVIKNDSNLHLIGLLSPGGVHSHEEHIFEMIKIAKQKGIKRLYLHAFLDGRDTPPRSAEKSIKKADKLLQDLNLGYIASVCGRYYAMDRDNRWDRVEKAYNAIVNANADFIYDSALEALEQSYARDQSDEFVIPTCIKKDGHLVKVQDNDSVIFMNFRADRAREISHAFTDESFDHFPRKKHLNINFTTLTEYDSKLKCAVAFPPKQPINTLGEVLMKNHKTQLRIAETEKYPHVTFFFNGGREEQFEGEDRILIPSPKVATYDLQPEMSAPEVTDKLVAAINSGKYDCIVCNYANSDMVGHTGNYEAAMQAIEYLDKCIARLKDAILEHDGNMFITADHGNADMMVNPETQKPHTAHTTNLVPFIYVGHKKAQVALEHGKLSDIAPTLLNVMGIAQPKEMTGKTIFNFEK</sequence>
<comment type="function">
    <text evidence="1">Catalyzes the interconversion of 2-phosphoglycerate and 3-phosphoglycerate.</text>
</comment>
<comment type="catalytic activity">
    <reaction evidence="1">
        <text>(2R)-2-phosphoglycerate = (2R)-3-phosphoglycerate</text>
        <dbReference type="Rhea" id="RHEA:15901"/>
        <dbReference type="ChEBI" id="CHEBI:58272"/>
        <dbReference type="ChEBI" id="CHEBI:58289"/>
        <dbReference type="EC" id="5.4.2.12"/>
    </reaction>
</comment>
<comment type="cofactor">
    <cofactor evidence="1">
        <name>Mn(2+)</name>
        <dbReference type="ChEBI" id="CHEBI:29035"/>
    </cofactor>
    <text evidence="1">Binds 2 manganese ions per subunit.</text>
</comment>
<comment type="pathway">
    <text evidence="1">Carbohydrate degradation; glycolysis; pyruvate from D-glyceraldehyde 3-phosphate: step 3/5.</text>
</comment>
<comment type="subunit">
    <text evidence="1">Monomer.</text>
</comment>
<comment type="similarity">
    <text evidence="1">Belongs to the BPG-independent phosphoglycerate mutase family.</text>
</comment>
<gene>
    <name evidence="1" type="primary">gpmI</name>
    <name type="ordered locus">FTW_1495</name>
</gene>
<feature type="chain" id="PRO_1000063972" description="2,3-bisphosphoglycerate-independent phosphoglycerate mutase">
    <location>
        <begin position="1"/>
        <end position="512"/>
    </location>
</feature>
<feature type="active site" description="Phosphoserine intermediate" evidence="1">
    <location>
        <position position="61"/>
    </location>
</feature>
<feature type="binding site" evidence="1">
    <location>
        <position position="11"/>
    </location>
    <ligand>
        <name>Mn(2+)</name>
        <dbReference type="ChEBI" id="CHEBI:29035"/>
        <label>2</label>
    </ligand>
</feature>
<feature type="binding site" evidence="1">
    <location>
        <position position="61"/>
    </location>
    <ligand>
        <name>Mn(2+)</name>
        <dbReference type="ChEBI" id="CHEBI:29035"/>
        <label>2</label>
    </ligand>
</feature>
<feature type="binding site" evidence="1">
    <location>
        <position position="122"/>
    </location>
    <ligand>
        <name>substrate</name>
    </ligand>
</feature>
<feature type="binding site" evidence="1">
    <location>
        <begin position="152"/>
        <end position="153"/>
    </location>
    <ligand>
        <name>substrate</name>
    </ligand>
</feature>
<feature type="binding site" evidence="1">
    <location>
        <position position="184"/>
    </location>
    <ligand>
        <name>substrate</name>
    </ligand>
</feature>
<feature type="binding site" evidence="1">
    <location>
        <position position="190"/>
    </location>
    <ligand>
        <name>substrate</name>
    </ligand>
</feature>
<feature type="binding site" evidence="1">
    <location>
        <begin position="259"/>
        <end position="262"/>
    </location>
    <ligand>
        <name>substrate</name>
    </ligand>
</feature>
<feature type="binding site" evidence="1">
    <location>
        <position position="332"/>
    </location>
    <ligand>
        <name>substrate</name>
    </ligand>
</feature>
<feature type="binding site" evidence="1">
    <location>
        <position position="399"/>
    </location>
    <ligand>
        <name>Mn(2+)</name>
        <dbReference type="ChEBI" id="CHEBI:29035"/>
        <label>1</label>
    </ligand>
</feature>
<feature type="binding site" evidence="1">
    <location>
        <position position="403"/>
    </location>
    <ligand>
        <name>Mn(2+)</name>
        <dbReference type="ChEBI" id="CHEBI:29035"/>
        <label>1</label>
    </ligand>
</feature>
<feature type="binding site" evidence="1">
    <location>
        <position position="440"/>
    </location>
    <ligand>
        <name>Mn(2+)</name>
        <dbReference type="ChEBI" id="CHEBI:29035"/>
        <label>2</label>
    </ligand>
</feature>
<feature type="binding site" evidence="1">
    <location>
        <position position="441"/>
    </location>
    <ligand>
        <name>Mn(2+)</name>
        <dbReference type="ChEBI" id="CHEBI:29035"/>
        <label>2</label>
    </ligand>
</feature>
<feature type="binding site" evidence="1">
    <location>
        <position position="459"/>
    </location>
    <ligand>
        <name>Mn(2+)</name>
        <dbReference type="ChEBI" id="CHEBI:29035"/>
        <label>1</label>
    </ligand>
</feature>
<dbReference type="EC" id="5.4.2.12" evidence="1"/>
<dbReference type="EMBL" id="CP000608">
    <property type="protein sequence ID" value="ABO47219.1"/>
    <property type="molecule type" value="Genomic_DNA"/>
</dbReference>
<dbReference type="RefSeq" id="WP_003026771.1">
    <property type="nucleotide sequence ID" value="NC_009257.1"/>
</dbReference>
<dbReference type="SMR" id="A4IZ68"/>
<dbReference type="KEGG" id="ftw:FTW_1495"/>
<dbReference type="HOGENOM" id="CLU_026099_2_0_6"/>
<dbReference type="UniPathway" id="UPA00109">
    <property type="reaction ID" value="UER00186"/>
</dbReference>
<dbReference type="GO" id="GO:0005829">
    <property type="term" value="C:cytosol"/>
    <property type="evidence" value="ECO:0007669"/>
    <property type="project" value="TreeGrafter"/>
</dbReference>
<dbReference type="GO" id="GO:0030145">
    <property type="term" value="F:manganese ion binding"/>
    <property type="evidence" value="ECO:0007669"/>
    <property type="project" value="UniProtKB-UniRule"/>
</dbReference>
<dbReference type="GO" id="GO:0004619">
    <property type="term" value="F:phosphoglycerate mutase activity"/>
    <property type="evidence" value="ECO:0007669"/>
    <property type="project" value="UniProtKB-EC"/>
</dbReference>
<dbReference type="GO" id="GO:0006007">
    <property type="term" value="P:glucose catabolic process"/>
    <property type="evidence" value="ECO:0007669"/>
    <property type="project" value="InterPro"/>
</dbReference>
<dbReference type="GO" id="GO:0006096">
    <property type="term" value="P:glycolytic process"/>
    <property type="evidence" value="ECO:0007669"/>
    <property type="project" value="UniProtKB-UniRule"/>
</dbReference>
<dbReference type="CDD" id="cd16010">
    <property type="entry name" value="iPGM"/>
    <property type="match status" value="1"/>
</dbReference>
<dbReference type="FunFam" id="3.40.1450.10:FF:000001">
    <property type="entry name" value="2,3-bisphosphoglycerate-independent phosphoglycerate mutase"/>
    <property type="match status" value="1"/>
</dbReference>
<dbReference type="FunFam" id="3.40.720.10:FF:000001">
    <property type="entry name" value="2,3-bisphosphoglycerate-independent phosphoglycerate mutase"/>
    <property type="match status" value="1"/>
</dbReference>
<dbReference type="Gene3D" id="3.40.720.10">
    <property type="entry name" value="Alkaline Phosphatase, subunit A"/>
    <property type="match status" value="1"/>
</dbReference>
<dbReference type="Gene3D" id="3.40.1450.10">
    <property type="entry name" value="BPG-independent phosphoglycerate mutase, domain B"/>
    <property type="match status" value="1"/>
</dbReference>
<dbReference type="HAMAP" id="MF_01038">
    <property type="entry name" value="GpmI"/>
    <property type="match status" value="1"/>
</dbReference>
<dbReference type="InterPro" id="IPR017850">
    <property type="entry name" value="Alkaline_phosphatase_core_sf"/>
</dbReference>
<dbReference type="InterPro" id="IPR011258">
    <property type="entry name" value="BPG-indep_PGM_N"/>
</dbReference>
<dbReference type="InterPro" id="IPR006124">
    <property type="entry name" value="Metalloenzyme"/>
</dbReference>
<dbReference type="InterPro" id="IPR036646">
    <property type="entry name" value="PGAM_B_sf"/>
</dbReference>
<dbReference type="InterPro" id="IPR005995">
    <property type="entry name" value="Pgm_bpd_ind"/>
</dbReference>
<dbReference type="NCBIfam" id="TIGR01307">
    <property type="entry name" value="pgm_bpd_ind"/>
    <property type="match status" value="1"/>
</dbReference>
<dbReference type="PANTHER" id="PTHR31637">
    <property type="entry name" value="2,3-BISPHOSPHOGLYCERATE-INDEPENDENT PHOSPHOGLYCERATE MUTASE"/>
    <property type="match status" value="1"/>
</dbReference>
<dbReference type="PANTHER" id="PTHR31637:SF0">
    <property type="entry name" value="2,3-BISPHOSPHOGLYCERATE-INDEPENDENT PHOSPHOGLYCERATE MUTASE"/>
    <property type="match status" value="1"/>
</dbReference>
<dbReference type="Pfam" id="PF06415">
    <property type="entry name" value="iPGM_N"/>
    <property type="match status" value="1"/>
</dbReference>
<dbReference type="Pfam" id="PF01676">
    <property type="entry name" value="Metalloenzyme"/>
    <property type="match status" value="1"/>
</dbReference>
<dbReference type="PIRSF" id="PIRSF001492">
    <property type="entry name" value="IPGAM"/>
    <property type="match status" value="1"/>
</dbReference>
<dbReference type="SUPFAM" id="SSF64158">
    <property type="entry name" value="2,3-Bisphosphoglycerate-independent phosphoglycerate mutase, substrate-binding domain"/>
    <property type="match status" value="1"/>
</dbReference>
<dbReference type="SUPFAM" id="SSF53649">
    <property type="entry name" value="Alkaline phosphatase-like"/>
    <property type="match status" value="1"/>
</dbReference>
<proteinExistence type="inferred from homology"/>